<reference key="1">
    <citation type="submission" date="2008-01" db="EMBL/GenBank/DDBJ databases">
        <title>Complete sequence of Pseudomonas putida GB-1.</title>
        <authorList>
            <consortium name="US DOE Joint Genome Institute"/>
            <person name="Copeland A."/>
            <person name="Lucas S."/>
            <person name="Lapidus A."/>
            <person name="Barry K."/>
            <person name="Glavina del Rio T."/>
            <person name="Dalin E."/>
            <person name="Tice H."/>
            <person name="Pitluck S."/>
            <person name="Bruce D."/>
            <person name="Goodwin L."/>
            <person name="Chertkov O."/>
            <person name="Brettin T."/>
            <person name="Detter J.C."/>
            <person name="Han C."/>
            <person name="Kuske C.R."/>
            <person name="Schmutz J."/>
            <person name="Larimer F."/>
            <person name="Land M."/>
            <person name="Hauser L."/>
            <person name="Kyrpides N."/>
            <person name="Kim E."/>
            <person name="McCarthy J.K."/>
            <person name="Richardson P."/>
        </authorList>
    </citation>
    <scope>NUCLEOTIDE SEQUENCE [LARGE SCALE GENOMIC DNA]</scope>
    <source>
        <strain>GB-1</strain>
    </source>
</reference>
<feature type="chain" id="PRO_1000082731" description="Phosphoribosyl-dephospho-CoA transferase">
    <location>
        <begin position="1"/>
        <end position="204"/>
    </location>
</feature>
<feature type="active site" evidence="1">
    <location>
        <position position="129"/>
    </location>
</feature>
<feature type="active site" evidence="1">
    <location>
        <position position="131"/>
    </location>
</feature>
<name>MDCG_PSEPG</name>
<protein>
    <recommendedName>
        <fullName evidence="1">Phosphoribosyl-dephospho-CoA transferase</fullName>
        <ecNumber evidence="1">2.7.7.66</ecNumber>
    </recommendedName>
    <alternativeName>
        <fullName evidence="1">Malonate decarboxylase holo-[acyl-carrier-protein] synthase</fullName>
        <shortName evidence="1">Holo-ACP synthase</shortName>
    </alternativeName>
</protein>
<sequence length="204" mass="21714">MNAPRPHDLLWGMPVSALPADAPQWALDVLAGAQPVVVRRAICDHGWVAVGLRGQGRTQRFAALMRLVDIQRQQGPEALRGPGQSPWPALQALASVAPVLNASGLAWGPTGGAGYQIATGIEVLHTGSDLDLLLHTPQPLARAQARELLDILDCAPCRIDVQLETPAGAVALREWAGFARRVLLKSDHGPRLVGDPWAAQERAA</sequence>
<accession>B0KQS7</accession>
<evidence type="ECO:0000255" key="1">
    <source>
        <dbReference type="HAMAP-Rule" id="MF_00650"/>
    </source>
</evidence>
<comment type="function">
    <text evidence="1">Transfers 2'-(5-triphosphoribosyl)-3'-dephosphocoenzyme-A to the apo-[acyl-carrier-protein] of the malonate decarboxylase to yield holo-[acyl-carrier-protein].</text>
</comment>
<comment type="catalytic activity">
    <reaction evidence="1">
        <text>apo-[malonate decarboxylase ACP] + 2'-(5''-triphospho-alpha-D-ribosyl)-3'-dephospho-CoA = holo-[malonate decarboxylase ACP] + diphosphate</text>
        <dbReference type="Rhea" id="RHEA:42644"/>
        <dbReference type="Rhea" id="RHEA-COMP:10160"/>
        <dbReference type="Rhea" id="RHEA-COMP:10161"/>
        <dbReference type="ChEBI" id="CHEBI:29999"/>
        <dbReference type="ChEBI" id="CHEBI:33019"/>
        <dbReference type="ChEBI" id="CHEBI:61378"/>
        <dbReference type="ChEBI" id="CHEBI:82683"/>
        <dbReference type="EC" id="2.7.7.66"/>
    </reaction>
</comment>
<comment type="similarity">
    <text evidence="1">Belongs to the MdcG family.</text>
</comment>
<gene>
    <name evidence="1" type="primary">mdcG</name>
    <name type="ordered locus">PputGB1_2443</name>
</gene>
<proteinExistence type="inferred from homology"/>
<keyword id="KW-0548">Nucleotidyltransferase</keyword>
<keyword id="KW-0808">Transferase</keyword>
<dbReference type="EC" id="2.7.7.66" evidence="1"/>
<dbReference type="EMBL" id="CP000926">
    <property type="protein sequence ID" value="ABY98342.1"/>
    <property type="molecule type" value="Genomic_DNA"/>
</dbReference>
<dbReference type="RefSeq" id="WP_012272085.1">
    <property type="nucleotide sequence ID" value="NC_010322.1"/>
</dbReference>
<dbReference type="KEGG" id="ppg:PputGB1_2443"/>
<dbReference type="eggNOG" id="ENOG502Z8NU">
    <property type="taxonomic scope" value="Bacteria"/>
</dbReference>
<dbReference type="HOGENOM" id="CLU_111981_0_0_6"/>
<dbReference type="Proteomes" id="UP000002157">
    <property type="component" value="Chromosome"/>
</dbReference>
<dbReference type="GO" id="GO:0016779">
    <property type="term" value="F:nucleotidyltransferase activity"/>
    <property type="evidence" value="ECO:0007669"/>
    <property type="project" value="UniProtKB-UniRule"/>
</dbReference>
<dbReference type="HAMAP" id="MF_00650">
    <property type="entry name" value="Malonate_MdcG"/>
    <property type="match status" value="1"/>
</dbReference>
<dbReference type="InterPro" id="IPR017557">
    <property type="entry name" value="Holo-ACP_synthase"/>
</dbReference>
<dbReference type="InterPro" id="IPR049180">
    <property type="entry name" value="MdcG_C"/>
</dbReference>
<dbReference type="InterPro" id="IPR048903">
    <property type="entry name" value="MdcG_N"/>
</dbReference>
<dbReference type="NCBIfam" id="TIGR03135">
    <property type="entry name" value="malonate_mdcG"/>
    <property type="match status" value="1"/>
</dbReference>
<dbReference type="NCBIfam" id="NF002332">
    <property type="entry name" value="PRK01293.1"/>
    <property type="match status" value="1"/>
</dbReference>
<dbReference type="Pfam" id="PF10620">
    <property type="entry name" value="MdcG"/>
    <property type="match status" value="1"/>
</dbReference>
<dbReference type="Pfam" id="PF20866">
    <property type="entry name" value="MdcG_N"/>
    <property type="match status" value="1"/>
</dbReference>
<organism>
    <name type="scientific">Pseudomonas putida (strain GB-1)</name>
    <dbReference type="NCBI Taxonomy" id="76869"/>
    <lineage>
        <taxon>Bacteria</taxon>
        <taxon>Pseudomonadati</taxon>
        <taxon>Pseudomonadota</taxon>
        <taxon>Gammaproteobacteria</taxon>
        <taxon>Pseudomonadales</taxon>
        <taxon>Pseudomonadaceae</taxon>
        <taxon>Pseudomonas</taxon>
    </lineage>
</organism>